<accession>Q8K9Y9</accession>
<sequence>MAKKDYYQILGIPKSAEEREIKKAYKRLAMKYHPDRNQGDKNAENKFKEIKEAYEILINEEKRTAYDQYGHAAFENGYNQNNTYSTFTSSTDFGDIFGDVFGDIFGGSRNQRVKKGADLCYNMEISLEEAVKGTTKEIRIPTFQKCKTCYGMGTSTGTKPNGCSTCHGKGQIHIRKGFFTVQQSCPTCNGIGTVIKNPCRMCRGQGRIKTNKTLSVKIPPGIDTNDKIRLSKEGEAGTNGAQPGDLYVQMKVNKHPIFEREENNLYCEVPINFTMAALGGEIEVPTLDGRVNLKIPSETQSGKLFRIRGKGVKSVQSRSRGDLLCRVVVETPVNLNEKQKYLLSELGNSFNGFRGDKNSPRSKRFFDGVKRFFDDLTK</sequence>
<proteinExistence type="inferred from homology"/>
<dbReference type="EMBL" id="AE013218">
    <property type="protein sequence ID" value="AAM67713.1"/>
    <property type="molecule type" value="Genomic_DNA"/>
</dbReference>
<dbReference type="RefSeq" id="WP_011053680.1">
    <property type="nucleotide sequence ID" value="NC_004061.1"/>
</dbReference>
<dbReference type="SMR" id="Q8K9Y9"/>
<dbReference type="STRING" id="198804.BUsg_145"/>
<dbReference type="GeneID" id="93003615"/>
<dbReference type="KEGG" id="bas:BUsg_145"/>
<dbReference type="eggNOG" id="COG0484">
    <property type="taxonomic scope" value="Bacteria"/>
</dbReference>
<dbReference type="HOGENOM" id="CLU_017633_0_7_6"/>
<dbReference type="Proteomes" id="UP000000416">
    <property type="component" value="Chromosome"/>
</dbReference>
<dbReference type="GO" id="GO:0005737">
    <property type="term" value="C:cytoplasm"/>
    <property type="evidence" value="ECO:0007669"/>
    <property type="project" value="UniProtKB-SubCell"/>
</dbReference>
<dbReference type="GO" id="GO:0005524">
    <property type="term" value="F:ATP binding"/>
    <property type="evidence" value="ECO:0007669"/>
    <property type="project" value="InterPro"/>
</dbReference>
<dbReference type="GO" id="GO:0031072">
    <property type="term" value="F:heat shock protein binding"/>
    <property type="evidence" value="ECO:0007669"/>
    <property type="project" value="InterPro"/>
</dbReference>
<dbReference type="GO" id="GO:0051082">
    <property type="term" value="F:unfolded protein binding"/>
    <property type="evidence" value="ECO:0007669"/>
    <property type="project" value="UniProtKB-UniRule"/>
</dbReference>
<dbReference type="GO" id="GO:0008270">
    <property type="term" value="F:zinc ion binding"/>
    <property type="evidence" value="ECO:0007669"/>
    <property type="project" value="UniProtKB-UniRule"/>
</dbReference>
<dbReference type="GO" id="GO:0051085">
    <property type="term" value="P:chaperone cofactor-dependent protein refolding"/>
    <property type="evidence" value="ECO:0007669"/>
    <property type="project" value="TreeGrafter"/>
</dbReference>
<dbReference type="GO" id="GO:0006260">
    <property type="term" value="P:DNA replication"/>
    <property type="evidence" value="ECO:0007669"/>
    <property type="project" value="UniProtKB-KW"/>
</dbReference>
<dbReference type="GO" id="GO:0042026">
    <property type="term" value="P:protein refolding"/>
    <property type="evidence" value="ECO:0007669"/>
    <property type="project" value="TreeGrafter"/>
</dbReference>
<dbReference type="GO" id="GO:0009408">
    <property type="term" value="P:response to heat"/>
    <property type="evidence" value="ECO:0007669"/>
    <property type="project" value="InterPro"/>
</dbReference>
<dbReference type="CDD" id="cd06257">
    <property type="entry name" value="DnaJ"/>
    <property type="match status" value="1"/>
</dbReference>
<dbReference type="CDD" id="cd10747">
    <property type="entry name" value="DnaJ_C"/>
    <property type="match status" value="1"/>
</dbReference>
<dbReference type="CDD" id="cd10719">
    <property type="entry name" value="DnaJ_zf"/>
    <property type="match status" value="1"/>
</dbReference>
<dbReference type="FunFam" id="1.10.287.110:FF:000034">
    <property type="entry name" value="Chaperone protein DnaJ"/>
    <property type="match status" value="1"/>
</dbReference>
<dbReference type="FunFam" id="2.10.230.10:FF:000002">
    <property type="entry name" value="Molecular chaperone DnaJ"/>
    <property type="match status" value="1"/>
</dbReference>
<dbReference type="FunFam" id="2.60.260.20:FF:000004">
    <property type="entry name" value="Molecular chaperone DnaJ"/>
    <property type="match status" value="1"/>
</dbReference>
<dbReference type="Gene3D" id="1.10.287.110">
    <property type="entry name" value="DnaJ domain"/>
    <property type="match status" value="1"/>
</dbReference>
<dbReference type="Gene3D" id="2.10.230.10">
    <property type="entry name" value="Heat shock protein DnaJ, cysteine-rich domain"/>
    <property type="match status" value="1"/>
</dbReference>
<dbReference type="Gene3D" id="2.60.260.20">
    <property type="entry name" value="Urease metallochaperone UreE, N-terminal domain"/>
    <property type="match status" value="2"/>
</dbReference>
<dbReference type="HAMAP" id="MF_01152">
    <property type="entry name" value="DnaJ"/>
    <property type="match status" value="1"/>
</dbReference>
<dbReference type="InterPro" id="IPR012724">
    <property type="entry name" value="DnaJ"/>
</dbReference>
<dbReference type="InterPro" id="IPR002939">
    <property type="entry name" value="DnaJ_C"/>
</dbReference>
<dbReference type="InterPro" id="IPR001623">
    <property type="entry name" value="DnaJ_domain"/>
</dbReference>
<dbReference type="InterPro" id="IPR018253">
    <property type="entry name" value="DnaJ_domain_CS"/>
</dbReference>
<dbReference type="InterPro" id="IPR008971">
    <property type="entry name" value="HSP40/DnaJ_pept-bd"/>
</dbReference>
<dbReference type="InterPro" id="IPR001305">
    <property type="entry name" value="HSP_DnaJ_Cys-rich_dom"/>
</dbReference>
<dbReference type="InterPro" id="IPR036410">
    <property type="entry name" value="HSP_DnaJ_Cys-rich_dom_sf"/>
</dbReference>
<dbReference type="InterPro" id="IPR036869">
    <property type="entry name" value="J_dom_sf"/>
</dbReference>
<dbReference type="NCBIfam" id="TIGR02349">
    <property type="entry name" value="DnaJ_bact"/>
    <property type="match status" value="1"/>
</dbReference>
<dbReference type="NCBIfam" id="NF008035">
    <property type="entry name" value="PRK10767.1"/>
    <property type="match status" value="1"/>
</dbReference>
<dbReference type="PANTHER" id="PTHR43096:SF48">
    <property type="entry name" value="CHAPERONE PROTEIN DNAJ"/>
    <property type="match status" value="1"/>
</dbReference>
<dbReference type="PANTHER" id="PTHR43096">
    <property type="entry name" value="DNAJ HOMOLOG 1, MITOCHONDRIAL-RELATED"/>
    <property type="match status" value="1"/>
</dbReference>
<dbReference type="Pfam" id="PF00226">
    <property type="entry name" value="DnaJ"/>
    <property type="match status" value="1"/>
</dbReference>
<dbReference type="Pfam" id="PF01556">
    <property type="entry name" value="DnaJ_C"/>
    <property type="match status" value="1"/>
</dbReference>
<dbReference type="Pfam" id="PF00684">
    <property type="entry name" value="DnaJ_CXXCXGXG"/>
    <property type="match status" value="1"/>
</dbReference>
<dbReference type="PRINTS" id="PR00625">
    <property type="entry name" value="JDOMAIN"/>
</dbReference>
<dbReference type="SMART" id="SM00271">
    <property type="entry name" value="DnaJ"/>
    <property type="match status" value="1"/>
</dbReference>
<dbReference type="SUPFAM" id="SSF46565">
    <property type="entry name" value="Chaperone J-domain"/>
    <property type="match status" value="1"/>
</dbReference>
<dbReference type="SUPFAM" id="SSF57938">
    <property type="entry name" value="DnaJ/Hsp40 cysteine-rich domain"/>
    <property type="match status" value="1"/>
</dbReference>
<dbReference type="SUPFAM" id="SSF49493">
    <property type="entry name" value="HSP40/DnaJ peptide-binding domain"/>
    <property type="match status" value="2"/>
</dbReference>
<dbReference type="PROSITE" id="PS00636">
    <property type="entry name" value="DNAJ_1"/>
    <property type="match status" value="1"/>
</dbReference>
<dbReference type="PROSITE" id="PS50076">
    <property type="entry name" value="DNAJ_2"/>
    <property type="match status" value="1"/>
</dbReference>
<dbReference type="PROSITE" id="PS51188">
    <property type="entry name" value="ZF_CR"/>
    <property type="match status" value="1"/>
</dbReference>
<organism>
    <name type="scientific">Buchnera aphidicola subsp. Schizaphis graminum (strain Sg)</name>
    <dbReference type="NCBI Taxonomy" id="198804"/>
    <lineage>
        <taxon>Bacteria</taxon>
        <taxon>Pseudomonadati</taxon>
        <taxon>Pseudomonadota</taxon>
        <taxon>Gammaproteobacteria</taxon>
        <taxon>Enterobacterales</taxon>
        <taxon>Erwiniaceae</taxon>
        <taxon>Buchnera</taxon>
    </lineage>
</organism>
<protein>
    <recommendedName>
        <fullName evidence="1">Chaperone protein DnaJ</fullName>
    </recommendedName>
</protein>
<keyword id="KW-0143">Chaperone</keyword>
<keyword id="KW-0963">Cytoplasm</keyword>
<keyword id="KW-0235">DNA replication</keyword>
<keyword id="KW-0479">Metal-binding</keyword>
<keyword id="KW-0677">Repeat</keyword>
<keyword id="KW-0346">Stress response</keyword>
<keyword id="KW-0862">Zinc</keyword>
<keyword id="KW-0863">Zinc-finger</keyword>
<name>DNAJ_BUCAP</name>
<gene>
    <name evidence="1" type="primary">dnaJ</name>
    <name type="ordered locus">BUsg_145</name>
</gene>
<comment type="function">
    <text evidence="1">Participates actively in the response to hyperosmotic and heat shock by preventing the aggregation of stress-denatured proteins and by disaggregating proteins, also in an autonomous, DnaK-independent fashion. Unfolded proteins bind initially to DnaJ; upon interaction with the DnaJ-bound protein, DnaK hydrolyzes its bound ATP, resulting in the formation of a stable complex. GrpE releases ADP from DnaK; ATP binding to DnaK triggers the release of the substrate protein, thus completing the reaction cycle. Several rounds of ATP-dependent interactions between DnaJ, DnaK and GrpE are required for fully efficient folding. Also involved, together with DnaK and GrpE, in the DNA replication of plasmids through activation of initiation proteins.</text>
</comment>
<comment type="cofactor">
    <cofactor evidence="1">
        <name>Zn(2+)</name>
        <dbReference type="ChEBI" id="CHEBI:29105"/>
    </cofactor>
    <text evidence="1">Binds 2 Zn(2+) ions per monomer.</text>
</comment>
<comment type="subunit">
    <text evidence="1">Homodimer.</text>
</comment>
<comment type="subcellular location">
    <subcellularLocation>
        <location evidence="1">Cytoplasm</location>
    </subcellularLocation>
</comment>
<comment type="domain">
    <text evidence="1">The J domain is necessary and sufficient to stimulate DnaK ATPase activity. Zinc center 1 plays an important role in the autonomous, DnaK-independent chaperone activity of DnaJ. Zinc center 2 is essential for interaction with DnaK and for DnaJ activity.</text>
</comment>
<comment type="similarity">
    <text evidence="1">Belongs to the DnaJ family.</text>
</comment>
<evidence type="ECO:0000255" key="1">
    <source>
        <dbReference type="HAMAP-Rule" id="MF_01152"/>
    </source>
</evidence>
<feature type="chain" id="PRO_0000070746" description="Chaperone protein DnaJ">
    <location>
        <begin position="1"/>
        <end position="378"/>
    </location>
</feature>
<feature type="domain" description="J" evidence="1">
    <location>
        <begin position="5"/>
        <end position="70"/>
    </location>
</feature>
<feature type="repeat" description="CXXCXGXG motif">
    <location>
        <begin position="146"/>
        <end position="153"/>
    </location>
</feature>
<feature type="repeat" description="CXXCXGXG motif">
    <location>
        <begin position="163"/>
        <end position="170"/>
    </location>
</feature>
<feature type="repeat" description="CXXCXGXG motif">
    <location>
        <begin position="185"/>
        <end position="192"/>
    </location>
</feature>
<feature type="repeat" description="CXXCXGXG motif">
    <location>
        <begin position="199"/>
        <end position="206"/>
    </location>
</feature>
<feature type="zinc finger region" description="CR-type" evidence="1">
    <location>
        <begin position="133"/>
        <end position="211"/>
    </location>
</feature>
<feature type="binding site" evidence="1">
    <location>
        <position position="146"/>
    </location>
    <ligand>
        <name>Zn(2+)</name>
        <dbReference type="ChEBI" id="CHEBI:29105"/>
        <label>1</label>
    </ligand>
</feature>
<feature type="binding site" evidence="1">
    <location>
        <position position="149"/>
    </location>
    <ligand>
        <name>Zn(2+)</name>
        <dbReference type="ChEBI" id="CHEBI:29105"/>
        <label>1</label>
    </ligand>
</feature>
<feature type="binding site" evidence="1">
    <location>
        <position position="163"/>
    </location>
    <ligand>
        <name>Zn(2+)</name>
        <dbReference type="ChEBI" id="CHEBI:29105"/>
        <label>2</label>
    </ligand>
</feature>
<feature type="binding site" evidence="1">
    <location>
        <position position="166"/>
    </location>
    <ligand>
        <name>Zn(2+)</name>
        <dbReference type="ChEBI" id="CHEBI:29105"/>
        <label>2</label>
    </ligand>
</feature>
<feature type="binding site" evidence="1">
    <location>
        <position position="185"/>
    </location>
    <ligand>
        <name>Zn(2+)</name>
        <dbReference type="ChEBI" id="CHEBI:29105"/>
        <label>2</label>
    </ligand>
</feature>
<feature type="binding site" evidence="1">
    <location>
        <position position="188"/>
    </location>
    <ligand>
        <name>Zn(2+)</name>
        <dbReference type="ChEBI" id="CHEBI:29105"/>
        <label>2</label>
    </ligand>
</feature>
<feature type="binding site" evidence="1">
    <location>
        <position position="199"/>
    </location>
    <ligand>
        <name>Zn(2+)</name>
        <dbReference type="ChEBI" id="CHEBI:29105"/>
        <label>1</label>
    </ligand>
</feature>
<feature type="binding site" evidence="1">
    <location>
        <position position="202"/>
    </location>
    <ligand>
        <name>Zn(2+)</name>
        <dbReference type="ChEBI" id="CHEBI:29105"/>
        <label>1</label>
    </ligand>
</feature>
<reference key="1">
    <citation type="journal article" date="2002" name="Science">
        <title>50 million years of genomic stasis in endosymbiotic bacteria.</title>
        <authorList>
            <person name="Tamas I."/>
            <person name="Klasson L."/>
            <person name="Canbaeck B."/>
            <person name="Naeslund A.K."/>
            <person name="Eriksson A.-S."/>
            <person name="Wernegreen J.J."/>
            <person name="Sandstroem J.P."/>
            <person name="Moran N.A."/>
            <person name="Andersson S.G.E."/>
        </authorList>
    </citation>
    <scope>NUCLEOTIDE SEQUENCE [LARGE SCALE GENOMIC DNA]</scope>
    <source>
        <strain>Sg</strain>
    </source>
</reference>